<gene>
    <name type="primary">fadR</name>
    <name type="ordered locus">Shewmr7_1643</name>
</gene>
<protein>
    <recommendedName>
        <fullName>Fatty acid metabolism regulator protein</fullName>
    </recommendedName>
</protein>
<sequence length="241" mass="27201">MIINAKGPASFAEKYIVRSIWENKFPPGSILPAERELSELIGVTRTTLREVLQRLARDGWLKIQHGKPTRVNNFWETSGLNILETIADLNPEGFPVLVDQLLSARTNVSAIYFRGALRNSPDTAVEVLAQIHQLEDTAESFAEYDYLLHHTLAFSSGNPLYVLILNGFKGLYSRVGRYYFSSSEARQLALNFYKELEVLAKAKNYVDVPALMRTYGINSGKMWLQLRDDMPTSIALQEANS</sequence>
<organism>
    <name type="scientific">Shewanella sp. (strain MR-7)</name>
    <dbReference type="NCBI Taxonomy" id="60481"/>
    <lineage>
        <taxon>Bacteria</taxon>
        <taxon>Pseudomonadati</taxon>
        <taxon>Pseudomonadota</taxon>
        <taxon>Gammaproteobacteria</taxon>
        <taxon>Alteromonadales</taxon>
        <taxon>Shewanellaceae</taxon>
        <taxon>Shewanella</taxon>
    </lineage>
</organism>
<reference key="1">
    <citation type="submission" date="2006-08" db="EMBL/GenBank/DDBJ databases">
        <title>Complete sequence of chromosome 1 of Shewanella sp. MR-7.</title>
        <authorList>
            <person name="Copeland A."/>
            <person name="Lucas S."/>
            <person name="Lapidus A."/>
            <person name="Barry K."/>
            <person name="Detter J.C."/>
            <person name="Glavina del Rio T."/>
            <person name="Hammon N."/>
            <person name="Israni S."/>
            <person name="Dalin E."/>
            <person name="Tice H."/>
            <person name="Pitluck S."/>
            <person name="Kiss H."/>
            <person name="Brettin T."/>
            <person name="Bruce D."/>
            <person name="Han C."/>
            <person name="Tapia R."/>
            <person name="Gilna P."/>
            <person name="Schmutz J."/>
            <person name="Larimer F."/>
            <person name="Land M."/>
            <person name="Hauser L."/>
            <person name="Kyrpides N."/>
            <person name="Mikhailova N."/>
            <person name="Nealson K."/>
            <person name="Konstantinidis K."/>
            <person name="Klappenbach J."/>
            <person name="Tiedje J."/>
            <person name="Richardson P."/>
        </authorList>
    </citation>
    <scope>NUCLEOTIDE SEQUENCE [LARGE SCALE GENOMIC DNA]</scope>
    <source>
        <strain>MR-7</strain>
    </source>
</reference>
<proteinExistence type="inferred from homology"/>
<feature type="chain" id="PRO_0000301513" description="Fatty acid metabolism regulator protein">
    <location>
        <begin position="1"/>
        <end position="241"/>
    </location>
</feature>
<feature type="domain" description="HTH gntR-type">
    <location>
        <begin position="6"/>
        <end position="74"/>
    </location>
</feature>
<feature type="DNA-binding region" description="H-T-H motif" evidence="1">
    <location>
        <begin position="34"/>
        <end position="53"/>
    </location>
</feature>
<evidence type="ECO:0000250" key="1"/>
<evidence type="ECO:0000305" key="2"/>
<keyword id="KW-0010">Activator</keyword>
<keyword id="KW-0963">Cytoplasm</keyword>
<keyword id="KW-0238">DNA-binding</keyword>
<keyword id="KW-0276">Fatty acid metabolism</keyword>
<keyword id="KW-0443">Lipid metabolism</keyword>
<keyword id="KW-0678">Repressor</keyword>
<keyword id="KW-0804">Transcription</keyword>
<keyword id="KW-0805">Transcription regulation</keyword>
<accession>Q0HW67</accession>
<comment type="function">
    <text evidence="1">Multifunctional regulator of fatty acid metabolism.</text>
</comment>
<comment type="subunit">
    <text evidence="1">Homodimer.</text>
</comment>
<comment type="subcellular location">
    <subcellularLocation>
        <location evidence="2">Cytoplasm</location>
    </subcellularLocation>
</comment>
<name>FADR_SHESR</name>
<dbReference type="EMBL" id="CP000444">
    <property type="protein sequence ID" value="ABI42638.1"/>
    <property type="molecule type" value="Genomic_DNA"/>
</dbReference>
<dbReference type="SMR" id="Q0HW67"/>
<dbReference type="KEGG" id="shm:Shewmr7_1643"/>
<dbReference type="HOGENOM" id="CLU_017584_9_4_6"/>
<dbReference type="GO" id="GO:0005737">
    <property type="term" value="C:cytoplasm"/>
    <property type="evidence" value="ECO:0007669"/>
    <property type="project" value="UniProtKB-SubCell"/>
</dbReference>
<dbReference type="GO" id="GO:0003677">
    <property type="term" value="F:DNA binding"/>
    <property type="evidence" value="ECO:0007669"/>
    <property type="project" value="UniProtKB-KW"/>
</dbReference>
<dbReference type="GO" id="GO:0003700">
    <property type="term" value="F:DNA-binding transcription factor activity"/>
    <property type="evidence" value="ECO:0007669"/>
    <property type="project" value="UniProtKB-UniRule"/>
</dbReference>
<dbReference type="GO" id="GO:0000062">
    <property type="term" value="F:fatty-acyl-CoA binding"/>
    <property type="evidence" value="ECO:0007669"/>
    <property type="project" value="InterPro"/>
</dbReference>
<dbReference type="GO" id="GO:0006631">
    <property type="term" value="P:fatty acid metabolic process"/>
    <property type="evidence" value="ECO:0007669"/>
    <property type="project" value="UniProtKB-KW"/>
</dbReference>
<dbReference type="GO" id="GO:0019217">
    <property type="term" value="P:regulation of fatty acid metabolic process"/>
    <property type="evidence" value="ECO:0007669"/>
    <property type="project" value="UniProtKB-UniRule"/>
</dbReference>
<dbReference type="CDD" id="cd07377">
    <property type="entry name" value="WHTH_GntR"/>
    <property type="match status" value="1"/>
</dbReference>
<dbReference type="Gene3D" id="1.20.120.530">
    <property type="entry name" value="GntR ligand-binding domain-like"/>
    <property type="match status" value="1"/>
</dbReference>
<dbReference type="Gene3D" id="1.10.10.10">
    <property type="entry name" value="Winged helix-like DNA-binding domain superfamily/Winged helix DNA-binding domain"/>
    <property type="match status" value="1"/>
</dbReference>
<dbReference type="HAMAP" id="MF_00696">
    <property type="entry name" value="HTH_FadR"/>
    <property type="match status" value="1"/>
</dbReference>
<dbReference type="InterPro" id="IPR014178">
    <property type="entry name" value="FA-response_TF_FadR"/>
</dbReference>
<dbReference type="InterPro" id="IPR028374">
    <property type="entry name" value="FadR_C"/>
</dbReference>
<dbReference type="InterPro" id="IPR008920">
    <property type="entry name" value="TF_FadR/GntR_C"/>
</dbReference>
<dbReference type="InterPro" id="IPR000524">
    <property type="entry name" value="Tscrpt_reg_HTH_GntR"/>
</dbReference>
<dbReference type="InterPro" id="IPR036388">
    <property type="entry name" value="WH-like_DNA-bd_sf"/>
</dbReference>
<dbReference type="InterPro" id="IPR036390">
    <property type="entry name" value="WH_DNA-bd_sf"/>
</dbReference>
<dbReference type="NCBIfam" id="TIGR02812">
    <property type="entry name" value="fadR_gamma"/>
    <property type="match status" value="1"/>
</dbReference>
<dbReference type="NCBIfam" id="NF003444">
    <property type="entry name" value="PRK04984.1"/>
    <property type="match status" value="1"/>
</dbReference>
<dbReference type="PANTHER" id="PTHR43537:SF52">
    <property type="entry name" value="FATTY ACID METABOLISM REGULATOR PROTEIN"/>
    <property type="match status" value="1"/>
</dbReference>
<dbReference type="PANTHER" id="PTHR43537">
    <property type="entry name" value="TRANSCRIPTIONAL REGULATOR, GNTR FAMILY"/>
    <property type="match status" value="1"/>
</dbReference>
<dbReference type="Pfam" id="PF07840">
    <property type="entry name" value="FadR_C"/>
    <property type="match status" value="1"/>
</dbReference>
<dbReference type="Pfam" id="PF00392">
    <property type="entry name" value="GntR"/>
    <property type="match status" value="1"/>
</dbReference>
<dbReference type="PRINTS" id="PR00035">
    <property type="entry name" value="HTHGNTR"/>
</dbReference>
<dbReference type="SMART" id="SM00345">
    <property type="entry name" value="HTH_GNTR"/>
    <property type="match status" value="1"/>
</dbReference>
<dbReference type="SUPFAM" id="SSF48008">
    <property type="entry name" value="GntR ligand-binding domain-like"/>
    <property type="match status" value="1"/>
</dbReference>
<dbReference type="SUPFAM" id="SSF46785">
    <property type="entry name" value="Winged helix' DNA-binding domain"/>
    <property type="match status" value="1"/>
</dbReference>
<dbReference type="PROSITE" id="PS50949">
    <property type="entry name" value="HTH_GNTR"/>
    <property type="match status" value="1"/>
</dbReference>